<evidence type="ECO:0000255" key="1">
    <source>
        <dbReference type="HAMAP-Rule" id="MF_01454"/>
    </source>
</evidence>
<evidence type="ECO:0000255" key="2">
    <source>
        <dbReference type="PROSITE-ProRule" id="PRU01231"/>
    </source>
</evidence>
<evidence type="ECO:0000256" key="3">
    <source>
        <dbReference type="SAM" id="MobiDB-lite"/>
    </source>
</evidence>
<keyword id="KW-0963">Cytoplasm</keyword>
<keyword id="KW-0342">GTP-binding</keyword>
<keyword id="KW-0378">Hydrolase</keyword>
<keyword id="KW-0460">Magnesium</keyword>
<keyword id="KW-0479">Metal-binding</keyword>
<keyword id="KW-0547">Nucleotide-binding</keyword>
<proteinExistence type="inferred from homology"/>
<name>OBG_AZOVD</name>
<gene>
    <name evidence="1" type="primary">obg</name>
    <name type="ordered locus">Avin_40770</name>
</gene>
<sequence>MKFVDEVSIFVKAGDGGNGMMSFRREKFIEKGGPNGGDGGDGGSVYLEADENLNTLVDYRYTRRFEAQRGEKGGSNDCTGAKGDDLILPVPVGTTVIDSGTQEIIGDLVRPGQRLLVAQGGWHGLGNTRFKSSTNRAPRQTTPGKPGEARDLKLELKVLADVGLLGLPNAGKSTFIRAVSAAKPKVADYPFTTLVPNLGVVSVGRYKSFVVADIPGLIEGAAEGAGLGIRFLKHLARTRLLLHLVDMAPLDGGDPAGAAETILRELEKFSPALTERERWLVLNKADQLLDEEREERLRAVLERLDWQGPVYVISALEREGTEALCQDIMHYLDERARRIAEEPEYAEALAELDRHIEDEARTRLQALDDQRALRRAGLKSADALEDEDDFDDEDDGDGPEIFYVR</sequence>
<protein>
    <recommendedName>
        <fullName evidence="1">GTPase Obg</fullName>
        <ecNumber evidence="1">3.6.5.-</ecNumber>
    </recommendedName>
    <alternativeName>
        <fullName evidence="1">GTP-binding protein Obg</fullName>
    </alternativeName>
</protein>
<comment type="function">
    <text evidence="1">An essential GTPase which binds GTP, GDP and possibly (p)ppGpp with moderate affinity, with high nucleotide exchange rates and a fairly low GTP hydrolysis rate. Plays a role in control of the cell cycle, stress response, ribosome biogenesis and in those bacteria that undergo differentiation, in morphogenesis control.</text>
</comment>
<comment type="cofactor">
    <cofactor evidence="1">
        <name>Mg(2+)</name>
        <dbReference type="ChEBI" id="CHEBI:18420"/>
    </cofactor>
</comment>
<comment type="subunit">
    <text evidence="1">Monomer.</text>
</comment>
<comment type="subcellular location">
    <subcellularLocation>
        <location evidence="1">Cytoplasm</location>
    </subcellularLocation>
</comment>
<comment type="similarity">
    <text evidence="1">Belongs to the TRAFAC class OBG-HflX-like GTPase superfamily. OBG GTPase family.</text>
</comment>
<dbReference type="EC" id="3.6.5.-" evidence="1"/>
<dbReference type="EMBL" id="CP001157">
    <property type="protein sequence ID" value="ACO80212.1"/>
    <property type="molecule type" value="Genomic_DNA"/>
</dbReference>
<dbReference type="RefSeq" id="WP_012702585.1">
    <property type="nucleotide sequence ID" value="NC_012560.1"/>
</dbReference>
<dbReference type="SMR" id="C1DEA4"/>
<dbReference type="STRING" id="322710.Avin_40770"/>
<dbReference type="EnsemblBacteria" id="ACO80212">
    <property type="protein sequence ID" value="ACO80212"/>
    <property type="gene ID" value="Avin_40770"/>
</dbReference>
<dbReference type="GeneID" id="88187015"/>
<dbReference type="KEGG" id="avn:Avin_40770"/>
<dbReference type="eggNOG" id="COG0536">
    <property type="taxonomic scope" value="Bacteria"/>
</dbReference>
<dbReference type="HOGENOM" id="CLU_011747_2_0_6"/>
<dbReference type="OrthoDB" id="9807318at2"/>
<dbReference type="Proteomes" id="UP000002424">
    <property type="component" value="Chromosome"/>
</dbReference>
<dbReference type="GO" id="GO:0005737">
    <property type="term" value="C:cytoplasm"/>
    <property type="evidence" value="ECO:0007669"/>
    <property type="project" value="UniProtKB-SubCell"/>
</dbReference>
<dbReference type="GO" id="GO:0005525">
    <property type="term" value="F:GTP binding"/>
    <property type="evidence" value="ECO:0007669"/>
    <property type="project" value="UniProtKB-UniRule"/>
</dbReference>
<dbReference type="GO" id="GO:0003924">
    <property type="term" value="F:GTPase activity"/>
    <property type="evidence" value="ECO:0007669"/>
    <property type="project" value="UniProtKB-UniRule"/>
</dbReference>
<dbReference type="GO" id="GO:0000287">
    <property type="term" value="F:magnesium ion binding"/>
    <property type="evidence" value="ECO:0007669"/>
    <property type="project" value="InterPro"/>
</dbReference>
<dbReference type="GO" id="GO:0042254">
    <property type="term" value="P:ribosome biogenesis"/>
    <property type="evidence" value="ECO:0007669"/>
    <property type="project" value="UniProtKB-UniRule"/>
</dbReference>
<dbReference type="CDD" id="cd01898">
    <property type="entry name" value="Obg"/>
    <property type="match status" value="1"/>
</dbReference>
<dbReference type="FunFam" id="2.70.210.12:FF:000001">
    <property type="entry name" value="GTPase Obg"/>
    <property type="match status" value="1"/>
</dbReference>
<dbReference type="FunFam" id="3.40.50.300:FF:000185">
    <property type="entry name" value="GTPase Obg"/>
    <property type="match status" value="1"/>
</dbReference>
<dbReference type="Gene3D" id="2.70.210.12">
    <property type="entry name" value="GTP1/OBG domain"/>
    <property type="match status" value="1"/>
</dbReference>
<dbReference type="Gene3D" id="3.40.50.300">
    <property type="entry name" value="P-loop containing nucleotide triphosphate hydrolases"/>
    <property type="match status" value="1"/>
</dbReference>
<dbReference type="HAMAP" id="MF_01454">
    <property type="entry name" value="GTPase_Obg"/>
    <property type="match status" value="1"/>
</dbReference>
<dbReference type="InterPro" id="IPR031167">
    <property type="entry name" value="G_OBG"/>
</dbReference>
<dbReference type="InterPro" id="IPR006073">
    <property type="entry name" value="GTP-bd"/>
</dbReference>
<dbReference type="InterPro" id="IPR014100">
    <property type="entry name" value="GTP-bd_Obg/CgtA"/>
</dbReference>
<dbReference type="InterPro" id="IPR006074">
    <property type="entry name" value="GTP1-OBG_CS"/>
</dbReference>
<dbReference type="InterPro" id="IPR006169">
    <property type="entry name" value="GTP1_OBG_dom"/>
</dbReference>
<dbReference type="InterPro" id="IPR036726">
    <property type="entry name" value="GTP1_OBG_dom_sf"/>
</dbReference>
<dbReference type="InterPro" id="IPR045086">
    <property type="entry name" value="OBG_GTPase"/>
</dbReference>
<dbReference type="InterPro" id="IPR027417">
    <property type="entry name" value="P-loop_NTPase"/>
</dbReference>
<dbReference type="NCBIfam" id="TIGR02729">
    <property type="entry name" value="Obg_CgtA"/>
    <property type="match status" value="1"/>
</dbReference>
<dbReference type="NCBIfam" id="NF008955">
    <property type="entry name" value="PRK12297.1"/>
    <property type="match status" value="1"/>
</dbReference>
<dbReference type="NCBIfam" id="NF008956">
    <property type="entry name" value="PRK12299.1"/>
    <property type="match status" value="1"/>
</dbReference>
<dbReference type="PANTHER" id="PTHR11702">
    <property type="entry name" value="DEVELOPMENTALLY REGULATED GTP-BINDING PROTEIN-RELATED"/>
    <property type="match status" value="1"/>
</dbReference>
<dbReference type="PANTHER" id="PTHR11702:SF31">
    <property type="entry name" value="MITOCHONDRIAL RIBOSOME-ASSOCIATED GTPASE 2"/>
    <property type="match status" value="1"/>
</dbReference>
<dbReference type="Pfam" id="PF01018">
    <property type="entry name" value="GTP1_OBG"/>
    <property type="match status" value="1"/>
</dbReference>
<dbReference type="Pfam" id="PF01926">
    <property type="entry name" value="MMR_HSR1"/>
    <property type="match status" value="1"/>
</dbReference>
<dbReference type="PIRSF" id="PIRSF002401">
    <property type="entry name" value="GTP_bd_Obg/CgtA"/>
    <property type="match status" value="1"/>
</dbReference>
<dbReference type="PRINTS" id="PR00326">
    <property type="entry name" value="GTP1OBG"/>
</dbReference>
<dbReference type="SUPFAM" id="SSF82051">
    <property type="entry name" value="Obg GTP-binding protein N-terminal domain"/>
    <property type="match status" value="1"/>
</dbReference>
<dbReference type="SUPFAM" id="SSF52540">
    <property type="entry name" value="P-loop containing nucleoside triphosphate hydrolases"/>
    <property type="match status" value="1"/>
</dbReference>
<dbReference type="PROSITE" id="PS51710">
    <property type="entry name" value="G_OBG"/>
    <property type="match status" value="1"/>
</dbReference>
<dbReference type="PROSITE" id="PS00905">
    <property type="entry name" value="GTP1_OBG"/>
    <property type="match status" value="1"/>
</dbReference>
<dbReference type="PROSITE" id="PS51883">
    <property type="entry name" value="OBG"/>
    <property type="match status" value="1"/>
</dbReference>
<accession>C1DEA4</accession>
<reference key="1">
    <citation type="journal article" date="2009" name="J. Bacteriol.">
        <title>Genome sequence of Azotobacter vinelandii, an obligate aerobe specialized to support diverse anaerobic metabolic processes.</title>
        <authorList>
            <person name="Setubal J.C."/>
            <person name="Dos Santos P."/>
            <person name="Goldman B.S."/>
            <person name="Ertesvaag H."/>
            <person name="Espin G."/>
            <person name="Rubio L.M."/>
            <person name="Valla S."/>
            <person name="Almeida N.F."/>
            <person name="Balasubramanian D."/>
            <person name="Cromes L."/>
            <person name="Curatti L."/>
            <person name="Du Z."/>
            <person name="Godsy E."/>
            <person name="Goodner B."/>
            <person name="Hellner-Burris K."/>
            <person name="Hernandez J.A."/>
            <person name="Houmiel K."/>
            <person name="Imperial J."/>
            <person name="Kennedy C."/>
            <person name="Larson T.J."/>
            <person name="Latreille P."/>
            <person name="Ligon L.S."/>
            <person name="Lu J."/>
            <person name="Maerk M."/>
            <person name="Miller N.M."/>
            <person name="Norton S."/>
            <person name="O'Carroll I.P."/>
            <person name="Paulsen I."/>
            <person name="Raulfs E.C."/>
            <person name="Roemer R."/>
            <person name="Rosser J."/>
            <person name="Segura D."/>
            <person name="Slater S."/>
            <person name="Stricklin S.L."/>
            <person name="Studholme D.J."/>
            <person name="Sun J."/>
            <person name="Viana C.J."/>
            <person name="Wallin E."/>
            <person name="Wang B."/>
            <person name="Wheeler C."/>
            <person name="Zhu H."/>
            <person name="Dean D.R."/>
            <person name="Dixon R."/>
            <person name="Wood D."/>
        </authorList>
    </citation>
    <scope>NUCLEOTIDE SEQUENCE [LARGE SCALE GENOMIC DNA]</scope>
    <source>
        <strain>DJ / ATCC BAA-1303</strain>
    </source>
</reference>
<organism>
    <name type="scientific">Azotobacter vinelandii (strain DJ / ATCC BAA-1303)</name>
    <dbReference type="NCBI Taxonomy" id="322710"/>
    <lineage>
        <taxon>Bacteria</taxon>
        <taxon>Pseudomonadati</taxon>
        <taxon>Pseudomonadota</taxon>
        <taxon>Gammaproteobacteria</taxon>
        <taxon>Pseudomonadales</taxon>
        <taxon>Pseudomonadaceae</taxon>
        <taxon>Azotobacter</taxon>
    </lineage>
</organism>
<feature type="chain" id="PRO_0000385712" description="GTPase Obg">
    <location>
        <begin position="1"/>
        <end position="405"/>
    </location>
</feature>
<feature type="domain" description="Obg" evidence="2">
    <location>
        <begin position="1"/>
        <end position="159"/>
    </location>
</feature>
<feature type="domain" description="OBG-type G" evidence="1">
    <location>
        <begin position="160"/>
        <end position="333"/>
    </location>
</feature>
<feature type="region of interest" description="Disordered" evidence="3">
    <location>
        <begin position="127"/>
        <end position="148"/>
    </location>
</feature>
<feature type="region of interest" description="Disordered" evidence="3">
    <location>
        <begin position="383"/>
        <end position="405"/>
    </location>
</feature>
<feature type="compositionally biased region" description="Polar residues" evidence="3">
    <location>
        <begin position="129"/>
        <end position="143"/>
    </location>
</feature>
<feature type="compositionally biased region" description="Acidic residues" evidence="3">
    <location>
        <begin position="383"/>
        <end position="398"/>
    </location>
</feature>
<feature type="binding site" evidence="1">
    <location>
        <begin position="166"/>
        <end position="173"/>
    </location>
    <ligand>
        <name>GTP</name>
        <dbReference type="ChEBI" id="CHEBI:37565"/>
    </ligand>
</feature>
<feature type="binding site" evidence="1">
    <location>
        <position position="173"/>
    </location>
    <ligand>
        <name>Mg(2+)</name>
        <dbReference type="ChEBI" id="CHEBI:18420"/>
    </ligand>
</feature>
<feature type="binding site" evidence="1">
    <location>
        <begin position="191"/>
        <end position="195"/>
    </location>
    <ligand>
        <name>GTP</name>
        <dbReference type="ChEBI" id="CHEBI:37565"/>
    </ligand>
</feature>
<feature type="binding site" evidence="1">
    <location>
        <position position="193"/>
    </location>
    <ligand>
        <name>Mg(2+)</name>
        <dbReference type="ChEBI" id="CHEBI:18420"/>
    </ligand>
</feature>
<feature type="binding site" evidence="1">
    <location>
        <begin position="213"/>
        <end position="216"/>
    </location>
    <ligand>
        <name>GTP</name>
        <dbReference type="ChEBI" id="CHEBI:37565"/>
    </ligand>
</feature>
<feature type="binding site" evidence="1">
    <location>
        <begin position="283"/>
        <end position="286"/>
    </location>
    <ligand>
        <name>GTP</name>
        <dbReference type="ChEBI" id="CHEBI:37565"/>
    </ligand>
</feature>
<feature type="binding site" evidence="1">
    <location>
        <begin position="314"/>
        <end position="316"/>
    </location>
    <ligand>
        <name>GTP</name>
        <dbReference type="ChEBI" id="CHEBI:37565"/>
    </ligand>
</feature>